<protein>
    <recommendedName>
        <fullName evidence="1">Glucose-6-phosphate isomerase</fullName>
        <shortName evidence="1">GPI</shortName>
        <ecNumber evidence="1">5.3.1.9</ecNumber>
    </recommendedName>
    <alternativeName>
        <fullName evidence="1">Phosphoglucose isomerase</fullName>
        <shortName evidence="1">PGI</shortName>
    </alternativeName>
    <alternativeName>
        <fullName evidence="1">Phosphohexose isomerase</fullName>
        <shortName evidence="1">PHI</shortName>
    </alternativeName>
</protein>
<name>G6PI_CAMJD</name>
<organism>
    <name type="scientific">Campylobacter jejuni subsp. doylei (strain ATCC BAA-1458 / RM4099 / 269.97)</name>
    <dbReference type="NCBI Taxonomy" id="360109"/>
    <lineage>
        <taxon>Bacteria</taxon>
        <taxon>Pseudomonadati</taxon>
        <taxon>Campylobacterota</taxon>
        <taxon>Epsilonproteobacteria</taxon>
        <taxon>Campylobacterales</taxon>
        <taxon>Campylobacteraceae</taxon>
        <taxon>Campylobacter</taxon>
    </lineage>
</organism>
<dbReference type="EC" id="5.3.1.9" evidence="1"/>
<dbReference type="EMBL" id="CP000768">
    <property type="protein sequence ID" value="ABS43941.1"/>
    <property type="molecule type" value="Genomic_DNA"/>
</dbReference>
<dbReference type="SMR" id="A7H491"/>
<dbReference type="KEGG" id="cjd:JJD26997_1267"/>
<dbReference type="HOGENOM" id="CLU_017947_3_1_7"/>
<dbReference type="UniPathway" id="UPA00109">
    <property type="reaction ID" value="UER00181"/>
</dbReference>
<dbReference type="UniPathway" id="UPA00138"/>
<dbReference type="Proteomes" id="UP000002302">
    <property type="component" value="Chromosome"/>
</dbReference>
<dbReference type="GO" id="GO:0005829">
    <property type="term" value="C:cytosol"/>
    <property type="evidence" value="ECO:0007669"/>
    <property type="project" value="TreeGrafter"/>
</dbReference>
<dbReference type="GO" id="GO:0097367">
    <property type="term" value="F:carbohydrate derivative binding"/>
    <property type="evidence" value="ECO:0007669"/>
    <property type="project" value="InterPro"/>
</dbReference>
<dbReference type="GO" id="GO:0004347">
    <property type="term" value="F:glucose-6-phosphate isomerase activity"/>
    <property type="evidence" value="ECO:0007669"/>
    <property type="project" value="UniProtKB-UniRule"/>
</dbReference>
<dbReference type="GO" id="GO:0048029">
    <property type="term" value="F:monosaccharide binding"/>
    <property type="evidence" value="ECO:0007669"/>
    <property type="project" value="TreeGrafter"/>
</dbReference>
<dbReference type="GO" id="GO:0006094">
    <property type="term" value="P:gluconeogenesis"/>
    <property type="evidence" value="ECO:0007669"/>
    <property type="project" value="UniProtKB-UniRule"/>
</dbReference>
<dbReference type="GO" id="GO:0051156">
    <property type="term" value="P:glucose 6-phosphate metabolic process"/>
    <property type="evidence" value="ECO:0007669"/>
    <property type="project" value="TreeGrafter"/>
</dbReference>
<dbReference type="GO" id="GO:0006096">
    <property type="term" value="P:glycolytic process"/>
    <property type="evidence" value="ECO:0007669"/>
    <property type="project" value="UniProtKB-UniRule"/>
</dbReference>
<dbReference type="CDD" id="cd05015">
    <property type="entry name" value="SIS_PGI_1"/>
    <property type="match status" value="1"/>
</dbReference>
<dbReference type="CDD" id="cd05016">
    <property type="entry name" value="SIS_PGI_2"/>
    <property type="match status" value="1"/>
</dbReference>
<dbReference type="FunFam" id="1.10.1390.10:FF:000001">
    <property type="entry name" value="Glucose-6-phosphate isomerase"/>
    <property type="match status" value="1"/>
</dbReference>
<dbReference type="FunFam" id="3.40.50.10490:FF:000004">
    <property type="entry name" value="Glucose-6-phosphate isomerase"/>
    <property type="match status" value="1"/>
</dbReference>
<dbReference type="Gene3D" id="1.10.1390.10">
    <property type="match status" value="1"/>
</dbReference>
<dbReference type="Gene3D" id="3.40.50.10490">
    <property type="entry name" value="Glucose-6-phosphate isomerase like protein, domain 1"/>
    <property type="match status" value="2"/>
</dbReference>
<dbReference type="HAMAP" id="MF_00473">
    <property type="entry name" value="G6P_isomerase"/>
    <property type="match status" value="1"/>
</dbReference>
<dbReference type="InterPro" id="IPR001672">
    <property type="entry name" value="G6P_Isomerase"/>
</dbReference>
<dbReference type="InterPro" id="IPR023096">
    <property type="entry name" value="G6P_Isomerase_C"/>
</dbReference>
<dbReference type="InterPro" id="IPR018189">
    <property type="entry name" value="Phosphoglucose_isomerase_CS"/>
</dbReference>
<dbReference type="InterPro" id="IPR046348">
    <property type="entry name" value="SIS_dom_sf"/>
</dbReference>
<dbReference type="InterPro" id="IPR035476">
    <property type="entry name" value="SIS_PGI_1"/>
</dbReference>
<dbReference type="InterPro" id="IPR035482">
    <property type="entry name" value="SIS_PGI_2"/>
</dbReference>
<dbReference type="NCBIfam" id="NF001211">
    <property type="entry name" value="PRK00179.1"/>
    <property type="match status" value="1"/>
</dbReference>
<dbReference type="PANTHER" id="PTHR11469">
    <property type="entry name" value="GLUCOSE-6-PHOSPHATE ISOMERASE"/>
    <property type="match status" value="1"/>
</dbReference>
<dbReference type="PANTHER" id="PTHR11469:SF1">
    <property type="entry name" value="GLUCOSE-6-PHOSPHATE ISOMERASE"/>
    <property type="match status" value="1"/>
</dbReference>
<dbReference type="Pfam" id="PF00342">
    <property type="entry name" value="PGI"/>
    <property type="match status" value="1"/>
</dbReference>
<dbReference type="PRINTS" id="PR00662">
    <property type="entry name" value="G6PISOMERASE"/>
</dbReference>
<dbReference type="SUPFAM" id="SSF53697">
    <property type="entry name" value="SIS domain"/>
    <property type="match status" value="1"/>
</dbReference>
<dbReference type="PROSITE" id="PS00765">
    <property type="entry name" value="P_GLUCOSE_ISOMERASE_1"/>
    <property type="match status" value="1"/>
</dbReference>
<dbReference type="PROSITE" id="PS00174">
    <property type="entry name" value="P_GLUCOSE_ISOMERASE_2"/>
    <property type="match status" value="1"/>
</dbReference>
<dbReference type="PROSITE" id="PS51463">
    <property type="entry name" value="P_GLUCOSE_ISOMERASE_3"/>
    <property type="match status" value="1"/>
</dbReference>
<evidence type="ECO:0000255" key="1">
    <source>
        <dbReference type="HAMAP-Rule" id="MF_00473"/>
    </source>
</evidence>
<accession>A7H491</accession>
<gene>
    <name evidence="1" type="primary">pgi</name>
    <name type="ordered locus">JJD26997_1267</name>
</gene>
<sequence length="547" mass="62457">MKSLTHLSSYRALSTHFSIIKDLHMRVLFKEDENRGFRYFLQSGDLKLDYSKNRISDETLKLLFDLANECSLKNKIKAMFEGQKINNTENRAVLHTALRNKTNRSVKIDDMDIMPNVREVLAKMQKFSDSLRTGSWLGYTNQIITDVVNIGIGGSDLGALMVCKALKNYAHPRLHMHFVSNVDGTQLQDVLERVHPASTLFIVASKTFSTQETLTNAFTARKWFLKHALDEKHIAKHFVAVSTNKEAVKDFGIEPENMFEFWNWVGGRYSLWSAIGLAIMIYLGKENFSSLLEGAYLMDEHFYNEPFEKNMPVIMALIGIWYINFFDAGSHIIAPYDSVLRYFPKFIQQLDMESNGKQIRKNGKKVDYDTGPIIWGDTGINAQHAFFQLLHQGTHLSPIDLIASLNKKGNLPDHHEILLSNVFAQAEAFMRGKTLEEVQEEMAKKGLKEDQIQKLAPHRVFSGNRPSNILLLDEIHPRSIGSLVALYEHKIFVQGVIWDINSFDQWGVELGKELAKTILSELKGGKTQEHDSSTNHLIQIYKNFNSN</sequence>
<feature type="chain" id="PRO_1000135521" description="Glucose-6-phosphate isomerase">
    <location>
        <begin position="1"/>
        <end position="547"/>
    </location>
</feature>
<feature type="active site" description="Proton donor" evidence="1">
    <location>
        <position position="353"/>
    </location>
</feature>
<feature type="active site" evidence="1">
    <location>
        <position position="384"/>
    </location>
</feature>
<feature type="active site" evidence="1">
    <location>
        <position position="512"/>
    </location>
</feature>
<comment type="function">
    <text evidence="1">Catalyzes the reversible isomerization of glucose-6-phosphate to fructose-6-phosphate.</text>
</comment>
<comment type="catalytic activity">
    <reaction evidence="1">
        <text>alpha-D-glucose 6-phosphate = beta-D-fructose 6-phosphate</text>
        <dbReference type="Rhea" id="RHEA:11816"/>
        <dbReference type="ChEBI" id="CHEBI:57634"/>
        <dbReference type="ChEBI" id="CHEBI:58225"/>
        <dbReference type="EC" id="5.3.1.9"/>
    </reaction>
</comment>
<comment type="pathway">
    <text evidence="1">Carbohydrate biosynthesis; gluconeogenesis.</text>
</comment>
<comment type="pathway">
    <text evidence="1">Carbohydrate degradation; glycolysis; D-glyceraldehyde 3-phosphate and glycerone phosphate from D-glucose: step 2/4.</text>
</comment>
<comment type="subcellular location">
    <subcellularLocation>
        <location evidence="1">Cytoplasm</location>
    </subcellularLocation>
</comment>
<comment type="similarity">
    <text evidence="1">Belongs to the GPI family.</text>
</comment>
<proteinExistence type="inferred from homology"/>
<keyword id="KW-0963">Cytoplasm</keyword>
<keyword id="KW-0312">Gluconeogenesis</keyword>
<keyword id="KW-0324">Glycolysis</keyword>
<keyword id="KW-0413">Isomerase</keyword>
<reference key="1">
    <citation type="submission" date="2007-07" db="EMBL/GenBank/DDBJ databases">
        <title>Complete genome sequence of Campylobacter jejuni subsp doylei 269.97 isolated from human blood.</title>
        <authorList>
            <person name="Fouts D.E."/>
            <person name="Mongodin E.F."/>
            <person name="Puiu D."/>
            <person name="Sebastian Y."/>
            <person name="Miller W.G."/>
            <person name="Mandrell R.E."/>
            <person name="Lastovica A.J."/>
            <person name="Nelson K.E."/>
        </authorList>
    </citation>
    <scope>NUCLEOTIDE SEQUENCE [LARGE SCALE GENOMIC DNA]</scope>
    <source>
        <strain>ATCC BAA-1458 / RM4099 / 269.97</strain>
    </source>
</reference>